<accession>Q59835</accession>
<accession>B9DPQ1</accession>
<organism>
    <name type="scientific">Staphylococcus carnosus (strain TM300)</name>
    <dbReference type="NCBI Taxonomy" id="396513"/>
    <lineage>
        <taxon>Bacteria</taxon>
        <taxon>Bacillati</taxon>
        <taxon>Bacillota</taxon>
        <taxon>Bacilli</taxon>
        <taxon>Bacillales</taxon>
        <taxon>Staphylococcaceae</taxon>
        <taxon>Staphylococcus</taxon>
    </lineage>
</organism>
<proteinExistence type="inferred from homology"/>
<sequence>MKKPYFVSITLFITIAVLILDQVTKAVIAKSMAIGDSYTVIPKFLYITSHRNNGAAWGILSGRMSFFFIVTIVVLGLLVFFYIKEAKGNFLMQVAISLLFAGALGNFIDRMLHGEVVDFIDTKIFSYDFPIFNGADSSLTIGVILVLIALLFDSRKSKV</sequence>
<feature type="chain" id="PRO_0000178819" description="Lipoprotein signal peptidase">
    <location>
        <begin position="1"/>
        <end position="159"/>
    </location>
</feature>
<feature type="transmembrane region" description="Helical" evidence="1">
    <location>
        <begin position="4"/>
        <end position="24"/>
    </location>
</feature>
<feature type="transmembrane region" description="Helical" evidence="1">
    <location>
        <begin position="64"/>
        <end position="84"/>
    </location>
</feature>
<feature type="transmembrane region" description="Helical" evidence="1">
    <location>
        <begin position="88"/>
        <end position="108"/>
    </location>
</feature>
<feature type="transmembrane region" description="Helical" evidence="1">
    <location>
        <begin position="131"/>
        <end position="151"/>
    </location>
</feature>
<feature type="active site" evidence="1">
    <location>
        <position position="118"/>
    </location>
</feature>
<feature type="active site" evidence="1">
    <location>
        <position position="136"/>
    </location>
</feature>
<dbReference type="EC" id="3.4.23.36" evidence="1"/>
<dbReference type="EMBL" id="X78084">
    <property type="protein sequence ID" value="CAA54991.1"/>
    <property type="molecule type" value="Genomic_DNA"/>
</dbReference>
<dbReference type="EMBL" id="AM295250">
    <property type="protein sequence ID" value="CAL27720.1"/>
    <property type="molecule type" value="Genomic_DNA"/>
</dbReference>
<dbReference type="PIR" id="S42986">
    <property type="entry name" value="S42986"/>
</dbReference>
<dbReference type="RefSeq" id="WP_015900062.1">
    <property type="nucleotide sequence ID" value="NC_012121.1"/>
</dbReference>
<dbReference type="SMR" id="Q59835"/>
<dbReference type="GeneID" id="93795745"/>
<dbReference type="KEGG" id="sca:SCA_0810"/>
<dbReference type="eggNOG" id="COG0597">
    <property type="taxonomic scope" value="Bacteria"/>
</dbReference>
<dbReference type="HOGENOM" id="CLU_083252_3_0_9"/>
<dbReference type="OrthoDB" id="9810259at2"/>
<dbReference type="BioCyc" id="SCAR396513:SCA_RS04100-MONOMER"/>
<dbReference type="UniPathway" id="UPA00665"/>
<dbReference type="Proteomes" id="UP000000444">
    <property type="component" value="Chromosome"/>
</dbReference>
<dbReference type="GO" id="GO:0005886">
    <property type="term" value="C:plasma membrane"/>
    <property type="evidence" value="ECO:0007669"/>
    <property type="project" value="UniProtKB-SubCell"/>
</dbReference>
<dbReference type="GO" id="GO:0004190">
    <property type="term" value="F:aspartic-type endopeptidase activity"/>
    <property type="evidence" value="ECO:0007669"/>
    <property type="project" value="UniProtKB-UniRule"/>
</dbReference>
<dbReference type="GO" id="GO:0006508">
    <property type="term" value="P:proteolysis"/>
    <property type="evidence" value="ECO:0007669"/>
    <property type="project" value="UniProtKB-KW"/>
</dbReference>
<dbReference type="HAMAP" id="MF_00161">
    <property type="entry name" value="LspA"/>
    <property type="match status" value="1"/>
</dbReference>
<dbReference type="InterPro" id="IPR001872">
    <property type="entry name" value="Peptidase_A8"/>
</dbReference>
<dbReference type="NCBIfam" id="TIGR00077">
    <property type="entry name" value="lspA"/>
    <property type="match status" value="1"/>
</dbReference>
<dbReference type="PANTHER" id="PTHR33695">
    <property type="entry name" value="LIPOPROTEIN SIGNAL PEPTIDASE"/>
    <property type="match status" value="1"/>
</dbReference>
<dbReference type="PANTHER" id="PTHR33695:SF1">
    <property type="entry name" value="LIPOPROTEIN SIGNAL PEPTIDASE"/>
    <property type="match status" value="1"/>
</dbReference>
<dbReference type="Pfam" id="PF01252">
    <property type="entry name" value="Peptidase_A8"/>
    <property type="match status" value="1"/>
</dbReference>
<dbReference type="PRINTS" id="PR00781">
    <property type="entry name" value="LIPOSIGPTASE"/>
</dbReference>
<dbReference type="PROSITE" id="PS00855">
    <property type="entry name" value="SPASE_II"/>
    <property type="match status" value="1"/>
</dbReference>
<protein>
    <recommendedName>
        <fullName evidence="1">Lipoprotein signal peptidase</fullName>
        <ecNumber evidence="1">3.4.23.36</ecNumber>
    </recommendedName>
    <alternativeName>
        <fullName evidence="1">Prolipoprotein signal peptidase</fullName>
    </alternativeName>
    <alternativeName>
        <fullName evidence="1">Signal peptidase II</fullName>
        <shortName evidence="1">SPase II</shortName>
    </alternativeName>
</protein>
<name>LSPA_STACT</name>
<reference key="1">
    <citation type="journal article" date="1995" name="FEMS Microbiol. Lett.">
        <title>Cloning and nucleotide sequence of the signal peptidase II (lsp)-gene from Staphylococcus carnosus.</title>
        <authorList>
            <person name="Witke C."/>
            <person name="Goetz F."/>
        </authorList>
    </citation>
    <scope>NUCLEOTIDE SEQUENCE [GENOMIC DNA]</scope>
</reference>
<reference key="2">
    <citation type="journal article" date="2009" name="Appl. Environ. Microbiol.">
        <title>Genome analysis of the meat starter culture bacterium Staphylococcus carnosus TM300.</title>
        <authorList>
            <person name="Rosenstein R."/>
            <person name="Nerz C."/>
            <person name="Biswas L."/>
            <person name="Resch A."/>
            <person name="Raddatz G."/>
            <person name="Schuster S.C."/>
            <person name="Goetz F."/>
        </authorList>
    </citation>
    <scope>NUCLEOTIDE SEQUENCE [LARGE SCALE GENOMIC DNA]</scope>
    <source>
        <strain>TM300</strain>
    </source>
</reference>
<comment type="function">
    <text evidence="1">This protein specifically catalyzes the removal of signal peptides from prolipoproteins.</text>
</comment>
<comment type="catalytic activity">
    <reaction evidence="1">
        <text>Release of signal peptides from bacterial membrane prolipoproteins. Hydrolyzes -Xaa-Yaa-Zaa-|-(S,diacylglyceryl)Cys-, in which Xaa is hydrophobic (preferably Leu), and Yaa (Ala or Ser) and Zaa (Gly or Ala) have small, neutral side chains.</text>
        <dbReference type="EC" id="3.4.23.36"/>
    </reaction>
</comment>
<comment type="pathway">
    <text evidence="1">Protein modification; lipoprotein biosynthesis (signal peptide cleavage).</text>
</comment>
<comment type="subcellular location">
    <subcellularLocation>
        <location evidence="1">Cell membrane</location>
        <topology evidence="1">Multi-pass membrane protein</topology>
    </subcellularLocation>
</comment>
<comment type="similarity">
    <text evidence="1 2">Belongs to the peptidase A8 family.</text>
</comment>
<gene>
    <name evidence="1" type="primary">lspA</name>
    <name type="synonym">lsp</name>
    <name type="ordered locus">Sca_0810</name>
</gene>
<evidence type="ECO:0000255" key="1">
    <source>
        <dbReference type="HAMAP-Rule" id="MF_00161"/>
    </source>
</evidence>
<evidence type="ECO:0000305" key="2"/>
<keyword id="KW-0064">Aspartyl protease</keyword>
<keyword id="KW-1003">Cell membrane</keyword>
<keyword id="KW-0378">Hydrolase</keyword>
<keyword id="KW-0472">Membrane</keyword>
<keyword id="KW-0645">Protease</keyword>
<keyword id="KW-1185">Reference proteome</keyword>
<keyword id="KW-0812">Transmembrane</keyword>
<keyword id="KW-1133">Transmembrane helix</keyword>